<sequence length="393" mass="43743">MSEQLLSELSPVAATSPSPAPAAQQKLNLLDMNRQQLREFFSSMGEKPFRADQVMKWIYHYCCDDFDQMTDINKHLRARLKALAEIRAPEVAEEQRSADGTIKWAIKVGDQQVETVYIPEDDRATLCVSSQVGCALQCTFCSTAQQGFNRNLRVSEIIGQVWRAAKIIGAAKVTGQRPITNVVMMGMGEPLLNLTNVVPAMEIMLDDFGFGLSKRRVTLSTSGVVPALEKLGDMIDVALAISLHAPNDTIRDEIVPINRKYNIETFLSAVRCYLDKSNANKGRVTVEYVMLDHINDGTEHAHQLAACLKYTPCKINLIPWNPFPGAPYGRSSNSRVDRFAKVLMGYEFTTIVRKTRGDDIDAACGQLAGEVIDRTKRTLRKRMNGESIEVKAV</sequence>
<gene>
    <name evidence="1" type="primary">rlmN</name>
    <name type="ordered locus">SG1763</name>
</gene>
<name>RLMN_SODGM</name>
<evidence type="ECO:0000255" key="1">
    <source>
        <dbReference type="HAMAP-Rule" id="MF_01849"/>
    </source>
</evidence>
<evidence type="ECO:0000255" key="2">
    <source>
        <dbReference type="PROSITE-ProRule" id="PRU01266"/>
    </source>
</evidence>
<evidence type="ECO:0000256" key="3">
    <source>
        <dbReference type="SAM" id="MobiDB-lite"/>
    </source>
</evidence>
<dbReference type="EC" id="2.1.1.192" evidence="1"/>
<dbReference type="EMBL" id="AP008232">
    <property type="protein sequence ID" value="BAE75038.1"/>
    <property type="molecule type" value="Genomic_DNA"/>
</dbReference>
<dbReference type="RefSeq" id="WP_011411587.1">
    <property type="nucleotide sequence ID" value="NC_007712.1"/>
</dbReference>
<dbReference type="SMR" id="Q2NS37"/>
<dbReference type="STRING" id="343509.SG1763"/>
<dbReference type="KEGG" id="sgl:SG1763"/>
<dbReference type="eggNOG" id="COG0820">
    <property type="taxonomic scope" value="Bacteria"/>
</dbReference>
<dbReference type="HOGENOM" id="CLU_029101_0_0_6"/>
<dbReference type="OrthoDB" id="9793973at2"/>
<dbReference type="BioCyc" id="SGLO343509:SGP1_RS16060-MONOMER"/>
<dbReference type="Proteomes" id="UP000001932">
    <property type="component" value="Chromosome"/>
</dbReference>
<dbReference type="GO" id="GO:0005737">
    <property type="term" value="C:cytoplasm"/>
    <property type="evidence" value="ECO:0007669"/>
    <property type="project" value="UniProtKB-SubCell"/>
</dbReference>
<dbReference type="GO" id="GO:0051539">
    <property type="term" value="F:4 iron, 4 sulfur cluster binding"/>
    <property type="evidence" value="ECO:0007669"/>
    <property type="project" value="UniProtKB-UniRule"/>
</dbReference>
<dbReference type="GO" id="GO:0046872">
    <property type="term" value="F:metal ion binding"/>
    <property type="evidence" value="ECO:0007669"/>
    <property type="project" value="UniProtKB-KW"/>
</dbReference>
<dbReference type="GO" id="GO:0070040">
    <property type="term" value="F:rRNA (adenine(2503)-C2-)-methyltransferase activity"/>
    <property type="evidence" value="ECO:0007669"/>
    <property type="project" value="UniProtKB-UniRule"/>
</dbReference>
<dbReference type="GO" id="GO:0019843">
    <property type="term" value="F:rRNA binding"/>
    <property type="evidence" value="ECO:0007669"/>
    <property type="project" value="UniProtKB-UniRule"/>
</dbReference>
<dbReference type="GO" id="GO:0002935">
    <property type="term" value="F:tRNA (adenine(37)-C2)-methyltransferase activity"/>
    <property type="evidence" value="ECO:0007669"/>
    <property type="project" value="UniProtKB-UniRule"/>
</dbReference>
<dbReference type="GO" id="GO:0000049">
    <property type="term" value="F:tRNA binding"/>
    <property type="evidence" value="ECO:0007669"/>
    <property type="project" value="UniProtKB-UniRule"/>
</dbReference>
<dbReference type="GO" id="GO:0070475">
    <property type="term" value="P:rRNA base methylation"/>
    <property type="evidence" value="ECO:0007669"/>
    <property type="project" value="UniProtKB-UniRule"/>
</dbReference>
<dbReference type="GO" id="GO:0030488">
    <property type="term" value="P:tRNA methylation"/>
    <property type="evidence" value="ECO:0007669"/>
    <property type="project" value="UniProtKB-UniRule"/>
</dbReference>
<dbReference type="CDD" id="cd01335">
    <property type="entry name" value="Radical_SAM"/>
    <property type="match status" value="1"/>
</dbReference>
<dbReference type="FunFam" id="1.10.150.530:FF:000003">
    <property type="entry name" value="Dual-specificity RNA methyltransferase RlmN"/>
    <property type="match status" value="1"/>
</dbReference>
<dbReference type="FunFam" id="3.20.20.70:FF:000008">
    <property type="entry name" value="Dual-specificity RNA methyltransferase RlmN"/>
    <property type="match status" value="1"/>
</dbReference>
<dbReference type="Gene3D" id="1.10.150.530">
    <property type="match status" value="1"/>
</dbReference>
<dbReference type="Gene3D" id="3.20.20.70">
    <property type="entry name" value="Aldolase class I"/>
    <property type="match status" value="1"/>
</dbReference>
<dbReference type="HAMAP" id="MF_01849">
    <property type="entry name" value="RNA_methyltr_RlmN"/>
    <property type="match status" value="1"/>
</dbReference>
<dbReference type="InterPro" id="IPR013785">
    <property type="entry name" value="Aldolase_TIM"/>
</dbReference>
<dbReference type="InterPro" id="IPR040072">
    <property type="entry name" value="Methyltransferase_A"/>
</dbReference>
<dbReference type="InterPro" id="IPR048641">
    <property type="entry name" value="RlmN_N"/>
</dbReference>
<dbReference type="InterPro" id="IPR027492">
    <property type="entry name" value="RNA_MTrfase_RlmN"/>
</dbReference>
<dbReference type="InterPro" id="IPR004383">
    <property type="entry name" value="rRNA_lsu_MTrfase_RlmN/Cfr"/>
</dbReference>
<dbReference type="InterPro" id="IPR007197">
    <property type="entry name" value="rSAM"/>
</dbReference>
<dbReference type="NCBIfam" id="NF008396">
    <property type="entry name" value="PRK11194.1"/>
    <property type="match status" value="1"/>
</dbReference>
<dbReference type="NCBIfam" id="TIGR00048">
    <property type="entry name" value="rRNA_mod_RlmN"/>
    <property type="match status" value="1"/>
</dbReference>
<dbReference type="PANTHER" id="PTHR30544">
    <property type="entry name" value="23S RRNA METHYLTRANSFERASE"/>
    <property type="match status" value="1"/>
</dbReference>
<dbReference type="PANTHER" id="PTHR30544:SF5">
    <property type="entry name" value="RADICAL SAM CORE DOMAIN-CONTAINING PROTEIN"/>
    <property type="match status" value="1"/>
</dbReference>
<dbReference type="Pfam" id="PF04055">
    <property type="entry name" value="Radical_SAM"/>
    <property type="match status" value="1"/>
</dbReference>
<dbReference type="Pfam" id="PF21016">
    <property type="entry name" value="RlmN_N"/>
    <property type="match status" value="1"/>
</dbReference>
<dbReference type="PIRSF" id="PIRSF006004">
    <property type="entry name" value="CHP00048"/>
    <property type="match status" value="1"/>
</dbReference>
<dbReference type="SFLD" id="SFLDF00275">
    <property type="entry name" value="adenosine_C2_methyltransferase"/>
    <property type="match status" value="1"/>
</dbReference>
<dbReference type="SFLD" id="SFLDS00029">
    <property type="entry name" value="Radical_SAM"/>
    <property type="match status" value="1"/>
</dbReference>
<dbReference type="SUPFAM" id="SSF102114">
    <property type="entry name" value="Radical SAM enzymes"/>
    <property type="match status" value="1"/>
</dbReference>
<dbReference type="PROSITE" id="PS51918">
    <property type="entry name" value="RADICAL_SAM"/>
    <property type="match status" value="1"/>
</dbReference>
<keyword id="KW-0004">4Fe-4S</keyword>
<keyword id="KW-0963">Cytoplasm</keyword>
<keyword id="KW-1015">Disulfide bond</keyword>
<keyword id="KW-0408">Iron</keyword>
<keyword id="KW-0411">Iron-sulfur</keyword>
<keyword id="KW-0479">Metal-binding</keyword>
<keyword id="KW-0489">Methyltransferase</keyword>
<keyword id="KW-0698">rRNA processing</keyword>
<keyword id="KW-0949">S-adenosyl-L-methionine</keyword>
<keyword id="KW-0808">Transferase</keyword>
<keyword id="KW-0819">tRNA processing</keyword>
<feature type="chain" id="PRO_0000350418" description="Dual-specificity RNA methyltransferase RlmN">
    <location>
        <begin position="1"/>
        <end position="393"/>
    </location>
</feature>
<feature type="domain" description="Radical SAM core" evidence="2">
    <location>
        <begin position="120"/>
        <end position="358"/>
    </location>
</feature>
<feature type="region of interest" description="Disordered" evidence="3">
    <location>
        <begin position="1"/>
        <end position="22"/>
    </location>
</feature>
<feature type="compositionally biased region" description="Low complexity" evidence="3">
    <location>
        <begin position="10"/>
        <end position="22"/>
    </location>
</feature>
<feature type="active site" description="Proton acceptor" evidence="1">
    <location>
        <position position="114"/>
    </location>
</feature>
<feature type="active site" description="S-methylcysteine intermediate" evidence="1">
    <location>
        <position position="364"/>
    </location>
</feature>
<feature type="binding site" evidence="1">
    <location>
        <position position="134"/>
    </location>
    <ligand>
        <name>[4Fe-4S] cluster</name>
        <dbReference type="ChEBI" id="CHEBI:49883"/>
        <note>4Fe-4S-S-AdoMet</note>
    </ligand>
</feature>
<feature type="binding site" evidence="1">
    <location>
        <position position="138"/>
    </location>
    <ligand>
        <name>[4Fe-4S] cluster</name>
        <dbReference type="ChEBI" id="CHEBI:49883"/>
        <note>4Fe-4S-S-AdoMet</note>
    </ligand>
</feature>
<feature type="binding site" evidence="1">
    <location>
        <position position="141"/>
    </location>
    <ligand>
        <name>[4Fe-4S] cluster</name>
        <dbReference type="ChEBI" id="CHEBI:49883"/>
        <note>4Fe-4S-S-AdoMet</note>
    </ligand>
</feature>
<feature type="binding site" evidence="1">
    <location>
        <begin position="188"/>
        <end position="189"/>
    </location>
    <ligand>
        <name>S-adenosyl-L-methionine</name>
        <dbReference type="ChEBI" id="CHEBI:59789"/>
    </ligand>
</feature>
<feature type="binding site" evidence="1">
    <location>
        <position position="220"/>
    </location>
    <ligand>
        <name>S-adenosyl-L-methionine</name>
        <dbReference type="ChEBI" id="CHEBI:59789"/>
    </ligand>
</feature>
<feature type="binding site" evidence="1">
    <location>
        <begin position="242"/>
        <end position="244"/>
    </location>
    <ligand>
        <name>S-adenosyl-L-methionine</name>
        <dbReference type="ChEBI" id="CHEBI:59789"/>
    </ligand>
</feature>
<feature type="binding site" evidence="1">
    <location>
        <position position="321"/>
    </location>
    <ligand>
        <name>S-adenosyl-L-methionine</name>
        <dbReference type="ChEBI" id="CHEBI:59789"/>
    </ligand>
</feature>
<feature type="disulfide bond" description="(transient)" evidence="1">
    <location>
        <begin position="127"/>
        <end position="364"/>
    </location>
</feature>
<accession>Q2NS37</accession>
<proteinExistence type="inferred from homology"/>
<comment type="function">
    <text evidence="1">Specifically methylates position 2 of adenine 2503 in 23S rRNA and position 2 of adenine 37 in tRNAs. m2A2503 modification seems to play a crucial role in the proofreading step occurring at the peptidyl transferase center and thus would serve to optimize ribosomal fidelity.</text>
</comment>
<comment type="catalytic activity">
    <reaction evidence="1">
        <text>adenosine(2503) in 23S rRNA + 2 reduced [2Fe-2S]-[ferredoxin] + 2 S-adenosyl-L-methionine = 2-methyladenosine(2503) in 23S rRNA + 5'-deoxyadenosine + L-methionine + 2 oxidized [2Fe-2S]-[ferredoxin] + S-adenosyl-L-homocysteine</text>
        <dbReference type="Rhea" id="RHEA:42916"/>
        <dbReference type="Rhea" id="RHEA-COMP:10000"/>
        <dbReference type="Rhea" id="RHEA-COMP:10001"/>
        <dbReference type="Rhea" id="RHEA-COMP:10152"/>
        <dbReference type="Rhea" id="RHEA-COMP:10282"/>
        <dbReference type="ChEBI" id="CHEBI:17319"/>
        <dbReference type="ChEBI" id="CHEBI:33737"/>
        <dbReference type="ChEBI" id="CHEBI:33738"/>
        <dbReference type="ChEBI" id="CHEBI:57844"/>
        <dbReference type="ChEBI" id="CHEBI:57856"/>
        <dbReference type="ChEBI" id="CHEBI:59789"/>
        <dbReference type="ChEBI" id="CHEBI:74411"/>
        <dbReference type="ChEBI" id="CHEBI:74497"/>
        <dbReference type="EC" id="2.1.1.192"/>
    </reaction>
</comment>
<comment type="catalytic activity">
    <reaction evidence="1">
        <text>adenosine(37) in tRNA + 2 reduced [2Fe-2S]-[ferredoxin] + 2 S-adenosyl-L-methionine = 2-methyladenosine(37) in tRNA + 5'-deoxyadenosine + L-methionine + 2 oxidized [2Fe-2S]-[ferredoxin] + S-adenosyl-L-homocysteine</text>
        <dbReference type="Rhea" id="RHEA:43332"/>
        <dbReference type="Rhea" id="RHEA-COMP:10000"/>
        <dbReference type="Rhea" id="RHEA-COMP:10001"/>
        <dbReference type="Rhea" id="RHEA-COMP:10162"/>
        <dbReference type="Rhea" id="RHEA-COMP:10485"/>
        <dbReference type="ChEBI" id="CHEBI:17319"/>
        <dbReference type="ChEBI" id="CHEBI:33737"/>
        <dbReference type="ChEBI" id="CHEBI:33738"/>
        <dbReference type="ChEBI" id="CHEBI:57844"/>
        <dbReference type="ChEBI" id="CHEBI:57856"/>
        <dbReference type="ChEBI" id="CHEBI:59789"/>
        <dbReference type="ChEBI" id="CHEBI:74411"/>
        <dbReference type="ChEBI" id="CHEBI:74497"/>
        <dbReference type="EC" id="2.1.1.192"/>
    </reaction>
</comment>
<comment type="cofactor">
    <cofactor evidence="1">
        <name>[4Fe-4S] cluster</name>
        <dbReference type="ChEBI" id="CHEBI:49883"/>
    </cofactor>
    <text evidence="1">Binds 1 [4Fe-4S] cluster. The cluster is coordinated with 3 cysteines and an exchangeable S-adenosyl-L-methionine.</text>
</comment>
<comment type="subcellular location">
    <subcellularLocation>
        <location evidence="1">Cytoplasm</location>
    </subcellularLocation>
</comment>
<comment type="miscellaneous">
    <text evidence="1">Reaction proceeds by a ping-pong mechanism involving intermediate methylation of a conserved cysteine residue.</text>
</comment>
<comment type="similarity">
    <text evidence="1">Belongs to the radical SAM superfamily. RlmN family.</text>
</comment>
<organism>
    <name type="scientific">Sodalis glossinidius (strain morsitans)</name>
    <dbReference type="NCBI Taxonomy" id="343509"/>
    <lineage>
        <taxon>Bacteria</taxon>
        <taxon>Pseudomonadati</taxon>
        <taxon>Pseudomonadota</taxon>
        <taxon>Gammaproteobacteria</taxon>
        <taxon>Enterobacterales</taxon>
        <taxon>Bruguierivoracaceae</taxon>
        <taxon>Sodalis</taxon>
    </lineage>
</organism>
<protein>
    <recommendedName>
        <fullName evidence="1">Dual-specificity RNA methyltransferase RlmN</fullName>
        <ecNumber evidence="1">2.1.1.192</ecNumber>
    </recommendedName>
    <alternativeName>
        <fullName evidence="1">23S rRNA (adenine(2503)-C(2))-methyltransferase</fullName>
    </alternativeName>
    <alternativeName>
        <fullName evidence="1">23S rRNA m2A2503 methyltransferase</fullName>
    </alternativeName>
    <alternativeName>
        <fullName evidence="1">Ribosomal RNA large subunit methyltransferase N</fullName>
    </alternativeName>
    <alternativeName>
        <fullName evidence="1">tRNA (adenine(37)-C(2))-methyltransferase</fullName>
    </alternativeName>
    <alternativeName>
        <fullName evidence="1">tRNA m2A37 methyltransferase</fullName>
    </alternativeName>
</protein>
<reference key="1">
    <citation type="journal article" date="2006" name="Genome Res.">
        <title>Massive genome erosion and functional adaptations provide insights into the symbiotic lifestyle of Sodalis glossinidius in the tsetse host.</title>
        <authorList>
            <person name="Toh H."/>
            <person name="Weiss B.L."/>
            <person name="Perkin S.A.H."/>
            <person name="Yamashita A."/>
            <person name="Oshima K."/>
            <person name="Hattori M."/>
            <person name="Aksoy S."/>
        </authorList>
    </citation>
    <scope>NUCLEOTIDE SEQUENCE [LARGE SCALE GENOMIC DNA]</scope>
    <source>
        <strain>morsitans</strain>
    </source>
</reference>